<protein>
    <recommendedName>
        <fullName evidence="1">Phospho-N-acetylmuramoyl-pentapeptide-transferase</fullName>
        <ecNumber evidence="1">2.7.8.13</ecNumber>
    </recommendedName>
    <alternativeName>
        <fullName evidence="1">UDP-MurNAc-pentapeptide phosphotransferase</fullName>
    </alternativeName>
</protein>
<accession>A6Q1R7</accession>
<dbReference type="EC" id="2.7.8.13" evidence="1"/>
<dbReference type="EMBL" id="AP009178">
    <property type="protein sequence ID" value="BAF69426.1"/>
    <property type="molecule type" value="Genomic_DNA"/>
</dbReference>
<dbReference type="RefSeq" id="WP_012081689.1">
    <property type="nucleotide sequence ID" value="NC_009662.1"/>
</dbReference>
<dbReference type="SMR" id="A6Q1R7"/>
<dbReference type="FunCoup" id="A6Q1R7">
    <property type="interactions" value="316"/>
</dbReference>
<dbReference type="STRING" id="387092.NIS_0312"/>
<dbReference type="KEGG" id="nis:NIS_0312"/>
<dbReference type="eggNOG" id="COG0472">
    <property type="taxonomic scope" value="Bacteria"/>
</dbReference>
<dbReference type="HOGENOM" id="CLU_023982_0_0_7"/>
<dbReference type="InParanoid" id="A6Q1R7"/>
<dbReference type="OrthoDB" id="9805475at2"/>
<dbReference type="UniPathway" id="UPA00219"/>
<dbReference type="Proteomes" id="UP000001118">
    <property type="component" value="Chromosome"/>
</dbReference>
<dbReference type="GO" id="GO:0005886">
    <property type="term" value="C:plasma membrane"/>
    <property type="evidence" value="ECO:0007669"/>
    <property type="project" value="UniProtKB-SubCell"/>
</dbReference>
<dbReference type="GO" id="GO:0046872">
    <property type="term" value="F:metal ion binding"/>
    <property type="evidence" value="ECO:0007669"/>
    <property type="project" value="UniProtKB-KW"/>
</dbReference>
<dbReference type="GO" id="GO:0008963">
    <property type="term" value="F:phospho-N-acetylmuramoyl-pentapeptide-transferase activity"/>
    <property type="evidence" value="ECO:0007669"/>
    <property type="project" value="UniProtKB-UniRule"/>
</dbReference>
<dbReference type="GO" id="GO:0051992">
    <property type="term" value="F:UDP-N-acetylmuramoyl-L-alanyl-D-glutamyl-meso-2,6-diaminopimelyl-D-alanyl-D-alanine:undecaprenyl-phosphate transferase activity"/>
    <property type="evidence" value="ECO:0007669"/>
    <property type="project" value="RHEA"/>
</dbReference>
<dbReference type="GO" id="GO:0051301">
    <property type="term" value="P:cell division"/>
    <property type="evidence" value="ECO:0007669"/>
    <property type="project" value="UniProtKB-KW"/>
</dbReference>
<dbReference type="GO" id="GO:0071555">
    <property type="term" value="P:cell wall organization"/>
    <property type="evidence" value="ECO:0007669"/>
    <property type="project" value="UniProtKB-KW"/>
</dbReference>
<dbReference type="GO" id="GO:0009252">
    <property type="term" value="P:peptidoglycan biosynthetic process"/>
    <property type="evidence" value="ECO:0007669"/>
    <property type="project" value="UniProtKB-UniRule"/>
</dbReference>
<dbReference type="GO" id="GO:0008360">
    <property type="term" value="P:regulation of cell shape"/>
    <property type="evidence" value="ECO:0007669"/>
    <property type="project" value="UniProtKB-KW"/>
</dbReference>
<dbReference type="CDD" id="cd06852">
    <property type="entry name" value="GT_MraY"/>
    <property type="match status" value="1"/>
</dbReference>
<dbReference type="HAMAP" id="MF_00038">
    <property type="entry name" value="MraY"/>
    <property type="match status" value="1"/>
</dbReference>
<dbReference type="InterPro" id="IPR000715">
    <property type="entry name" value="Glycosyl_transferase_4"/>
</dbReference>
<dbReference type="InterPro" id="IPR003524">
    <property type="entry name" value="PNAcMuramoyl-5peptid_Trfase"/>
</dbReference>
<dbReference type="InterPro" id="IPR018480">
    <property type="entry name" value="PNAcMuramoyl-5peptid_Trfase_CS"/>
</dbReference>
<dbReference type="NCBIfam" id="TIGR00445">
    <property type="entry name" value="mraY"/>
    <property type="match status" value="1"/>
</dbReference>
<dbReference type="PANTHER" id="PTHR22926">
    <property type="entry name" value="PHOSPHO-N-ACETYLMURAMOYL-PENTAPEPTIDE-TRANSFERASE"/>
    <property type="match status" value="1"/>
</dbReference>
<dbReference type="PANTHER" id="PTHR22926:SF5">
    <property type="entry name" value="PHOSPHO-N-ACETYLMURAMOYL-PENTAPEPTIDE-TRANSFERASE HOMOLOG"/>
    <property type="match status" value="1"/>
</dbReference>
<dbReference type="Pfam" id="PF00953">
    <property type="entry name" value="Glycos_transf_4"/>
    <property type="match status" value="1"/>
</dbReference>
<dbReference type="Pfam" id="PF10555">
    <property type="entry name" value="MraY_sig1"/>
    <property type="match status" value="1"/>
</dbReference>
<dbReference type="PROSITE" id="PS01347">
    <property type="entry name" value="MRAY_1"/>
    <property type="match status" value="1"/>
</dbReference>
<dbReference type="PROSITE" id="PS01348">
    <property type="entry name" value="MRAY_2"/>
    <property type="match status" value="1"/>
</dbReference>
<reference key="1">
    <citation type="journal article" date="2007" name="Proc. Natl. Acad. Sci. U.S.A.">
        <title>Deep-sea vent epsilon-proteobacterial genomes provide insights into emergence of pathogens.</title>
        <authorList>
            <person name="Nakagawa S."/>
            <person name="Takaki Y."/>
            <person name="Shimamura S."/>
            <person name="Reysenbach A.-L."/>
            <person name="Takai K."/>
            <person name="Horikoshi K."/>
        </authorList>
    </citation>
    <scope>NUCLEOTIDE SEQUENCE [LARGE SCALE GENOMIC DNA]</scope>
    <source>
        <strain>SB155-2</strain>
    </source>
</reference>
<comment type="function">
    <text evidence="1">Catalyzes the initial step of the lipid cycle reactions in the biosynthesis of the cell wall peptidoglycan: transfers peptidoglycan precursor phospho-MurNAc-pentapeptide from UDP-MurNAc-pentapeptide onto the lipid carrier undecaprenyl phosphate, yielding undecaprenyl-pyrophosphoryl-MurNAc-pentapeptide, known as lipid I.</text>
</comment>
<comment type="catalytic activity">
    <reaction evidence="1">
        <text>UDP-N-acetyl-alpha-D-muramoyl-L-alanyl-gamma-D-glutamyl-meso-2,6-diaminopimeloyl-D-alanyl-D-alanine + di-trans,octa-cis-undecaprenyl phosphate = di-trans,octa-cis-undecaprenyl diphospho-N-acetyl-alpha-D-muramoyl-L-alanyl-D-glutamyl-meso-2,6-diaminopimeloyl-D-alanyl-D-alanine + UMP</text>
        <dbReference type="Rhea" id="RHEA:28386"/>
        <dbReference type="ChEBI" id="CHEBI:57865"/>
        <dbReference type="ChEBI" id="CHEBI:60392"/>
        <dbReference type="ChEBI" id="CHEBI:61386"/>
        <dbReference type="ChEBI" id="CHEBI:61387"/>
        <dbReference type="EC" id="2.7.8.13"/>
    </reaction>
</comment>
<comment type="cofactor">
    <cofactor evidence="1">
        <name>Mg(2+)</name>
        <dbReference type="ChEBI" id="CHEBI:18420"/>
    </cofactor>
</comment>
<comment type="pathway">
    <text evidence="1">Cell wall biogenesis; peptidoglycan biosynthesis.</text>
</comment>
<comment type="subcellular location">
    <subcellularLocation>
        <location evidence="1">Cell inner membrane</location>
        <topology evidence="1">Multi-pass membrane protein</topology>
    </subcellularLocation>
</comment>
<comment type="similarity">
    <text evidence="1">Belongs to the glycosyltransferase 4 family. MraY subfamily.</text>
</comment>
<keyword id="KW-0131">Cell cycle</keyword>
<keyword id="KW-0132">Cell division</keyword>
<keyword id="KW-0997">Cell inner membrane</keyword>
<keyword id="KW-1003">Cell membrane</keyword>
<keyword id="KW-0133">Cell shape</keyword>
<keyword id="KW-0961">Cell wall biogenesis/degradation</keyword>
<keyword id="KW-0460">Magnesium</keyword>
<keyword id="KW-0472">Membrane</keyword>
<keyword id="KW-0479">Metal-binding</keyword>
<keyword id="KW-0573">Peptidoglycan synthesis</keyword>
<keyword id="KW-1185">Reference proteome</keyword>
<keyword id="KW-0808">Transferase</keyword>
<keyword id="KW-0812">Transmembrane</keyword>
<keyword id="KW-1133">Transmembrane helix</keyword>
<organism>
    <name type="scientific">Nitratiruptor sp. (strain SB155-2)</name>
    <dbReference type="NCBI Taxonomy" id="387092"/>
    <lineage>
        <taxon>Bacteria</taxon>
        <taxon>Pseudomonadati</taxon>
        <taxon>Campylobacterota</taxon>
        <taxon>Epsilonproteobacteria</taxon>
        <taxon>Nautiliales</taxon>
        <taxon>Nitratiruptoraceae</taxon>
        <taxon>Nitratiruptor</taxon>
    </lineage>
</organism>
<proteinExistence type="inferred from homology"/>
<sequence>MLYYFYSIFHINIFQYITVRAGIAFFFAFFLTLYLMPKFIRWAMKKSSYQPIYSLAPEHHKKKANTPTMGGVVFIFSALLASLLTVKIHNPYVLGGFLTILGFLAIGVIDDYGKITKRSNQSGLSAKQKFFLQILVAFVVSLFLYEYAHLNSNLYVPFYKYPLLDMKIFGILFWTLVIVATSNAVNLTDGLDGLATVPSIMALTTLAIITYITGNAVLSHYLLLPKIIGVGEVSIIAAAFAGSLIGFLWYNCHPAEVFMGDSGSLTLGAFIGYMAIISKSEVLLILIGFVFVMEALSVIIQVGSFKLRKKRVFLMAPIHHHFEQKNWNESKIIVRFWIIALISNLIALITLKIR</sequence>
<feature type="chain" id="PRO_1000003022" description="Phospho-N-acetylmuramoyl-pentapeptide-transferase">
    <location>
        <begin position="1"/>
        <end position="354"/>
    </location>
</feature>
<feature type="transmembrane region" description="Helical" evidence="1">
    <location>
        <begin position="16"/>
        <end position="36"/>
    </location>
</feature>
<feature type="transmembrane region" description="Helical" evidence="1">
    <location>
        <begin position="66"/>
        <end position="86"/>
    </location>
</feature>
<feature type="transmembrane region" description="Helical" evidence="1">
    <location>
        <begin position="88"/>
        <end position="108"/>
    </location>
</feature>
<feature type="transmembrane region" description="Helical" evidence="1">
    <location>
        <begin position="130"/>
        <end position="150"/>
    </location>
</feature>
<feature type="transmembrane region" description="Helical" evidence="1">
    <location>
        <begin position="168"/>
        <end position="188"/>
    </location>
</feature>
<feature type="transmembrane region" description="Helical" evidence="1">
    <location>
        <begin position="193"/>
        <end position="213"/>
    </location>
</feature>
<feature type="transmembrane region" description="Helical" evidence="1">
    <location>
        <begin position="227"/>
        <end position="247"/>
    </location>
</feature>
<feature type="transmembrane region" description="Helical" evidence="1">
    <location>
        <begin position="257"/>
        <end position="277"/>
    </location>
</feature>
<feature type="transmembrane region" description="Helical" evidence="1">
    <location>
        <begin position="282"/>
        <end position="302"/>
    </location>
</feature>
<feature type="transmembrane region" description="Helical" evidence="1">
    <location>
        <begin position="331"/>
        <end position="351"/>
    </location>
</feature>
<evidence type="ECO:0000255" key="1">
    <source>
        <dbReference type="HAMAP-Rule" id="MF_00038"/>
    </source>
</evidence>
<name>MRAY_NITSB</name>
<gene>
    <name evidence="1" type="primary">mraY</name>
    <name type="ordered locus">NIS_0312</name>
</gene>